<feature type="signal peptide">
    <location>
        <begin position="1"/>
        <end position="19"/>
    </location>
</feature>
<feature type="chain" id="PRO_0000015229" description="Ig heavy chain V region MOPC 141">
    <location>
        <begin position="20"/>
        <end position="144"/>
    </location>
</feature>
<feature type="domain" description="Ig-like">
    <location>
        <begin position="20"/>
        <end position="130"/>
    </location>
</feature>
<feature type="non-terminal residue">
    <location>
        <position position="144"/>
    </location>
</feature>
<comment type="miscellaneous">
    <text>The sequence shown is translated from a differentiated gene isolated from a myeloma that secretes IgG2b.</text>
</comment>
<dbReference type="EMBL" id="AH001932">
    <property type="protein sequence ID" value="AAA38121.1"/>
    <property type="molecule type" value="Genomic_DNA"/>
</dbReference>
<dbReference type="PIR" id="A02094">
    <property type="entry name" value="G2MS14"/>
</dbReference>
<dbReference type="SMR" id="P01819"/>
<dbReference type="FunCoup" id="P01819">
    <property type="interactions" value="559"/>
</dbReference>
<dbReference type="InParanoid" id="P01819"/>
<dbReference type="Proteomes" id="UP000000589">
    <property type="component" value="Unplaced"/>
</dbReference>
<dbReference type="RNAct" id="P01819">
    <property type="molecule type" value="protein"/>
</dbReference>
<dbReference type="GO" id="GO:0005576">
    <property type="term" value="C:extracellular region"/>
    <property type="evidence" value="ECO:0007669"/>
    <property type="project" value="UniProtKB-ARBA"/>
</dbReference>
<dbReference type="GO" id="GO:0019814">
    <property type="term" value="C:immunoglobulin complex"/>
    <property type="evidence" value="ECO:0007669"/>
    <property type="project" value="UniProtKB-KW"/>
</dbReference>
<dbReference type="GO" id="GO:0003823">
    <property type="term" value="F:antigen binding"/>
    <property type="evidence" value="ECO:0000318"/>
    <property type="project" value="GO_Central"/>
</dbReference>
<dbReference type="GO" id="GO:0016064">
    <property type="term" value="P:immunoglobulin mediated immune response"/>
    <property type="evidence" value="ECO:0000318"/>
    <property type="project" value="GO_Central"/>
</dbReference>
<dbReference type="CDD" id="cd04981">
    <property type="entry name" value="IgV_H"/>
    <property type="match status" value="1"/>
</dbReference>
<dbReference type="FunFam" id="2.60.40.10:FF:001621">
    <property type="entry name" value="Immunoglobulin heavy variable 2-6-8"/>
    <property type="match status" value="1"/>
</dbReference>
<dbReference type="Gene3D" id="2.60.40.10">
    <property type="entry name" value="Immunoglobulins"/>
    <property type="match status" value="1"/>
</dbReference>
<dbReference type="InterPro" id="IPR007110">
    <property type="entry name" value="Ig-like_dom"/>
</dbReference>
<dbReference type="InterPro" id="IPR036179">
    <property type="entry name" value="Ig-like_dom_sf"/>
</dbReference>
<dbReference type="InterPro" id="IPR013783">
    <property type="entry name" value="Ig-like_fold"/>
</dbReference>
<dbReference type="InterPro" id="IPR003599">
    <property type="entry name" value="Ig_sub"/>
</dbReference>
<dbReference type="InterPro" id="IPR013106">
    <property type="entry name" value="Ig_V-set"/>
</dbReference>
<dbReference type="InterPro" id="IPR050199">
    <property type="entry name" value="IgHV"/>
</dbReference>
<dbReference type="PANTHER" id="PTHR23266">
    <property type="entry name" value="IMMUNOGLOBULIN HEAVY CHAIN"/>
    <property type="match status" value="1"/>
</dbReference>
<dbReference type="Pfam" id="PF07686">
    <property type="entry name" value="V-set"/>
    <property type="match status" value="1"/>
</dbReference>
<dbReference type="SMART" id="SM00409">
    <property type="entry name" value="IG"/>
    <property type="match status" value="1"/>
</dbReference>
<dbReference type="SMART" id="SM00406">
    <property type="entry name" value="IGv"/>
    <property type="match status" value="1"/>
</dbReference>
<dbReference type="SUPFAM" id="SSF48726">
    <property type="entry name" value="Immunoglobulin"/>
    <property type="match status" value="1"/>
</dbReference>
<dbReference type="PROSITE" id="PS50835">
    <property type="entry name" value="IG_LIKE"/>
    <property type="match status" value="1"/>
</dbReference>
<sequence length="144" mass="15759">MAVLALLFCLATFPSCILSQVQLKESGPGLVAPSQSLSITCTVSGFSLTGYGVNWVRQPPGKGLEWLGTIWGNGSTDYNSTLKSRLTITKDNSKSQVFLKMNSLQTDDTARYYCASVSIYYYGRSDKYFTLDYWGQGTSVTVSS</sequence>
<accession>P01819</accession>
<reference key="1">
    <citation type="journal article" date="1980" name="Nature">
        <title>Two types of somatic recombination are necessary for the generation of complete immunoglobulin heavy-chain genes.</title>
        <authorList>
            <person name="Sakano H."/>
            <person name="Maki R."/>
            <person name="Kurosawa Y."/>
            <person name="Roeder W."/>
            <person name="Tonegawa S."/>
        </authorList>
    </citation>
    <scope>NUCLEOTIDE SEQUENCE [GENOMIC DNA]</scope>
</reference>
<name>HVM43_MOUSE</name>
<organism>
    <name type="scientific">Mus musculus</name>
    <name type="common">Mouse</name>
    <dbReference type="NCBI Taxonomy" id="10090"/>
    <lineage>
        <taxon>Eukaryota</taxon>
        <taxon>Metazoa</taxon>
        <taxon>Chordata</taxon>
        <taxon>Craniata</taxon>
        <taxon>Vertebrata</taxon>
        <taxon>Euteleostomi</taxon>
        <taxon>Mammalia</taxon>
        <taxon>Eutheria</taxon>
        <taxon>Euarchontoglires</taxon>
        <taxon>Glires</taxon>
        <taxon>Rodentia</taxon>
        <taxon>Myomorpha</taxon>
        <taxon>Muroidea</taxon>
        <taxon>Muridae</taxon>
        <taxon>Murinae</taxon>
        <taxon>Mus</taxon>
        <taxon>Mus</taxon>
    </lineage>
</organism>
<keyword id="KW-1064">Adaptive immunity</keyword>
<keyword id="KW-0391">Immunity</keyword>
<keyword id="KW-1280">Immunoglobulin</keyword>
<keyword id="KW-1185">Reference proteome</keyword>
<keyword id="KW-0732">Signal</keyword>
<proteinExistence type="predicted"/>
<protein>
    <recommendedName>
        <fullName>Ig heavy chain V region MOPC 141</fullName>
    </recommendedName>
</protein>